<evidence type="ECO:0000255" key="1">
    <source>
        <dbReference type="HAMAP-Rule" id="MF_01520"/>
    </source>
</evidence>
<sequence length="386" mass="39571">MIRDERVAAILAAGGSGVRAGLRKQWLELGGESVLRRAARALVACDAVDELVVVVPSGEEGRGLAEVEGLGRPARAIAGGAARADSVRNGARAAEGCGIVLVHDAARPFATPGLAARVAEAAARDGAALAALPVTDTVKRAAPRDGAPIVEATLDRRALWLAQTPQGFRRALLLEAFEAAGDRAAEATDECALVEALGAPVTLVPGEPGNFKITGPDDVARARSILEAPVAMGVGYDTHRFAEGRRLVLGGVEFEGDGLLGHSDADVCAHAIGDAILGGAGLGDLGRHFPDTDPRWKGVSSLALLREIAAKVAAAGFRVGNCDVTLAARRPKIAPRAEEMRARLAEALGVTPGQVNVKATTGEGMGFVGRGEGIAAHAVALLVRVR</sequence>
<reference key="1">
    <citation type="journal article" date="2015" name="Genome Announc.">
        <title>Complete genome sequence of Anaeromyxobacter sp. Fw109-5, an anaerobic, metal-reducing bacterium isolated from a contaminated subsurface environment.</title>
        <authorList>
            <person name="Hwang C."/>
            <person name="Copeland A."/>
            <person name="Lucas S."/>
            <person name="Lapidus A."/>
            <person name="Barry K."/>
            <person name="Glavina Del Rio T."/>
            <person name="Dalin E."/>
            <person name="Tice H."/>
            <person name="Pitluck S."/>
            <person name="Sims D."/>
            <person name="Brettin T."/>
            <person name="Bruce D.C."/>
            <person name="Detter J.C."/>
            <person name="Han C.S."/>
            <person name="Schmutz J."/>
            <person name="Larimer F.W."/>
            <person name="Land M.L."/>
            <person name="Hauser L.J."/>
            <person name="Kyrpides N."/>
            <person name="Lykidis A."/>
            <person name="Richardson P."/>
            <person name="Belieav A."/>
            <person name="Sanford R.A."/>
            <person name="Loeffler F.E."/>
            <person name="Fields M.W."/>
        </authorList>
    </citation>
    <scope>NUCLEOTIDE SEQUENCE [LARGE SCALE GENOMIC DNA]</scope>
    <source>
        <strain>Fw109-5</strain>
    </source>
</reference>
<name>ISPDF_ANADF</name>
<gene>
    <name evidence="1" type="primary">ispDF</name>
    <name type="ordered locus">Anae109_2497</name>
</gene>
<accession>A7HDA2</accession>
<comment type="function">
    <text evidence="1">Bifunctional enzyme that catalyzes the formation of 4-diphosphocytidyl-2-C-methyl-D-erythritol from CTP and 2-C-methyl-D-erythritol 4-phosphate (MEP) (IspD), and catalyzes the conversion of 4-diphosphocytidyl-2-C-methyl-D-erythritol 2-phosphate (CDP-ME2P) to 2-C-methyl-D-erythritol 2,4-cyclodiphosphate (ME-CPP) with a corresponding release of cytidine 5-monophosphate (CMP) (IspF).</text>
</comment>
<comment type="catalytic activity">
    <reaction evidence="1">
        <text>2-C-methyl-D-erythritol 4-phosphate + CTP + H(+) = 4-CDP-2-C-methyl-D-erythritol + diphosphate</text>
        <dbReference type="Rhea" id="RHEA:13429"/>
        <dbReference type="ChEBI" id="CHEBI:15378"/>
        <dbReference type="ChEBI" id="CHEBI:33019"/>
        <dbReference type="ChEBI" id="CHEBI:37563"/>
        <dbReference type="ChEBI" id="CHEBI:57823"/>
        <dbReference type="ChEBI" id="CHEBI:58262"/>
        <dbReference type="EC" id="2.7.7.60"/>
    </reaction>
</comment>
<comment type="catalytic activity">
    <reaction evidence="1">
        <text>4-CDP-2-C-methyl-D-erythritol 2-phosphate = 2-C-methyl-D-erythritol 2,4-cyclic diphosphate + CMP</text>
        <dbReference type="Rhea" id="RHEA:23864"/>
        <dbReference type="ChEBI" id="CHEBI:57919"/>
        <dbReference type="ChEBI" id="CHEBI:58483"/>
        <dbReference type="ChEBI" id="CHEBI:60377"/>
        <dbReference type="EC" id="4.6.1.12"/>
    </reaction>
</comment>
<comment type="cofactor">
    <cofactor evidence="1">
        <name>a divalent metal cation</name>
        <dbReference type="ChEBI" id="CHEBI:60240"/>
    </cofactor>
</comment>
<comment type="pathway">
    <text evidence="1">Isoprenoid biosynthesis; isopentenyl diphosphate biosynthesis via DXP pathway; isopentenyl diphosphate from 1-deoxy-D-xylulose 5-phosphate: step 2/6.</text>
</comment>
<comment type="pathway">
    <text evidence="1">Isoprenoid biosynthesis; isopentenyl diphosphate biosynthesis via DXP pathway; isopentenyl diphosphate from 1-deoxy-D-xylulose 5-phosphate: step 4/6.</text>
</comment>
<comment type="similarity">
    <text evidence="1">In the N-terminal section; belongs to the IspD/TarI cytidylyltransferase family. IspD subfamily.</text>
</comment>
<comment type="similarity">
    <text evidence="1">In the C-terminal section; belongs to the IspF family.</text>
</comment>
<protein>
    <recommendedName>
        <fullName evidence="1">Bifunctional enzyme IspD/IspF</fullName>
    </recommendedName>
    <domain>
        <recommendedName>
            <fullName evidence="1">2-C-methyl-D-erythritol 4-phosphate cytidylyltransferase</fullName>
            <ecNumber evidence="1">2.7.7.60</ecNumber>
        </recommendedName>
        <alternativeName>
            <fullName evidence="1">4-diphosphocytidyl-2C-methyl-D-erythritol synthase</fullName>
        </alternativeName>
        <alternativeName>
            <fullName evidence="1">MEP cytidylyltransferase</fullName>
            <shortName evidence="1">MCT</shortName>
        </alternativeName>
    </domain>
    <domain>
        <recommendedName>
            <fullName evidence="1">2-C-methyl-D-erythritol 2,4-cyclodiphosphate synthase</fullName>
            <shortName evidence="1">MECDP-synthase</shortName>
            <shortName evidence="1">MECPP-synthase</shortName>
            <shortName evidence="1">MECPS</shortName>
            <ecNumber evidence="1">4.6.1.12</ecNumber>
        </recommendedName>
    </domain>
</protein>
<feature type="chain" id="PRO_0000315549" description="Bifunctional enzyme IspD/IspF">
    <location>
        <begin position="1"/>
        <end position="386"/>
    </location>
</feature>
<feature type="region of interest" description="2-C-methyl-D-erythritol 4-phosphate cytidylyltransferase" evidence="1">
    <location>
        <begin position="1"/>
        <end position="230"/>
    </location>
</feature>
<feature type="region of interest" description="2-C-methyl-D-erythritol 2,4-cyclodiphosphate synthase" evidence="1">
    <location>
        <begin position="231"/>
        <end position="386"/>
    </location>
</feature>
<feature type="binding site" evidence="1">
    <location>
        <begin position="237"/>
        <end position="239"/>
    </location>
    <ligand>
        <name>4-CDP-2-C-methyl-D-erythritol 2-phosphate</name>
        <dbReference type="ChEBI" id="CHEBI:57919"/>
    </ligand>
</feature>
<feature type="binding site" evidence="1">
    <location>
        <position position="237"/>
    </location>
    <ligand>
        <name>a divalent metal cation</name>
        <dbReference type="ChEBI" id="CHEBI:60240"/>
    </ligand>
</feature>
<feature type="binding site" evidence="1">
    <location>
        <position position="239"/>
    </location>
    <ligand>
        <name>a divalent metal cation</name>
        <dbReference type="ChEBI" id="CHEBI:60240"/>
    </ligand>
</feature>
<feature type="binding site" evidence="1">
    <location>
        <begin position="262"/>
        <end position="263"/>
    </location>
    <ligand>
        <name>4-CDP-2-C-methyl-D-erythritol 2-phosphate</name>
        <dbReference type="ChEBI" id="CHEBI:57919"/>
    </ligand>
</feature>
<feature type="binding site" evidence="1">
    <location>
        <position position="270"/>
    </location>
    <ligand>
        <name>a divalent metal cation</name>
        <dbReference type="ChEBI" id="CHEBI:60240"/>
    </ligand>
</feature>
<feature type="binding site" evidence="1">
    <location>
        <begin position="284"/>
        <end position="286"/>
    </location>
    <ligand>
        <name>4-CDP-2-C-methyl-D-erythritol 2-phosphate</name>
        <dbReference type="ChEBI" id="CHEBI:57919"/>
    </ligand>
</feature>
<feature type="binding site" evidence="1">
    <location>
        <begin position="289"/>
        <end position="293"/>
    </location>
    <ligand>
        <name>4-CDP-2-C-methyl-D-erythritol 2-phosphate</name>
        <dbReference type="ChEBI" id="CHEBI:57919"/>
    </ligand>
</feature>
<feature type="binding site" evidence="1">
    <location>
        <begin position="360"/>
        <end position="363"/>
    </location>
    <ligand>
        <name>4-CDP-2-C-methyl-D-erythritol 2-phosphate</name>
        <dbReference type="ChEBI" id="CHEBI:57919"/>
    </ligand>
</feature>
<feature type="binding site" evidence="1">
    <location>
        <position position="367"/>
    </location>
    <ligand>
        <name>4-CDP-2-C-methyl-D-erythritol 2-phosphate</name>
        <dbReference type="ChEBI" id="CHEBI:57919"/>
    </ligand>
</feature>
<feature type="binding site" evidence="1">
    <location>
        <position position="370"/>
    </location>
    <ligand>
        <name>4-CDP-2-C-methyl-D-erythritol 2-phosphate</name>
        <dbReference type="ChEBI" id="CHEBI:57919"/>
    </ligand>
</feature>
<feature type="site" description="Transition state stabilizer" evidence="1">
    <location>
        <position position="19"/>
    </location>
</feature>
<feature type="site" description="Transition state stabilizer" evidence="1">
    <location>
        <position position="24"/>
    </location>
</feature>
<feature type="site" description="Positions MEP for the nucleophilic attack" evidence="1">
    <location>
        <position position="156"/>
    </location>
</feature>
<feature type="site" description="Positions MEP for the nucleophilic attack" evidence="1">
    <location>
        <position position="212"/>
    </location>
</feature>
<feature type="site" description="Transition state stabilizer" evidence="1">
    <location>
        <position position="262"/>
    </location>
</feature>
<feature type="site" description="Transition state stabilizer" evidence="1">
    <location>
        <position position="361"/>
    </location>
</feature>
<organism>
    <name type="scientific">Anaeromyxobacter sp. (strain Fw109-5)</name>
    <dbReference type="NCBI Taxonomy" id="404589"/>
    <lineage>
        <taxon>Bacteria</taxon>
        <taxon>Pseudomonadati</taxon>
        <taxon>Myxococcota</taxon>
        <taxon>Myxococcia</taxon>
        <taxon>Myxococcales</taxon>
        <taxon>Cystobacterineae</taxon>
        <taxon>Anaeromyxobacteraceae</taxon>
        <taxon>Anaeromyxobacter</taxon>
    </lineage>
</organism>
<proteinExistence type="inferred from homology"/>
<keyword id="KW-0414">Isoprene biosynthesis</keyword>
<keyword id="KW-0456">Lyase</keyword>
<keyword id="KW-0479">Metal-binding</keyword>
<keyword id="KW-0511">Multifunctional enzyme</keyword>
<keyword id="KW-0548">Nucleotidyltransferase</keyword>
<keyword id="KW-1185">Reference proteome</keyword>
<keyword id="KW-0808">Transferase</keyword>
<dbReference type="EC" id="2.7.7.60" evidence="1"/>
<dbReference type="EC" id="4.6.1.12" evidence="1"/>
<dbReference type="EMBL" id="CP000769">
    <property type="protein sequence ID" value="ABS26698.1"/>
    <property type="molecule type" value="Genomic_DNA"/>
</dbReference>
<dbReference type="RefSeq" id="WP_012097290.1">
    <property type="nucleotide sequence ID" value="NC_009675.1"/>
</dbReference>
<dbReference type="SMR" id="A7HDA2"/>
<dbReference type="STRING" id="404589.Anae109_2497"/>
<dbReference type="KEGG" id="afw:Anae109_2497"/>
<dbReference type="eggNOG" id="COG0245">
    <property type="taxonomic scope" value="Bacteria"/>
</dbReference>
<dbReference type="eggNOG" id="COG1211">
    <property type="taxonomic scope" value="Bacteria"/>
</dbReference>
<dbReference type="HOGENOM" id="CLU_042800_2_5_7"/>
<dbReference type="OrthoDB" id="9804336at2"/>
<dbReference type="UniPathway" id="UPA00056">
    <property type="reaction ID" value="UER00093"/>
</dbReference>
<dbReference type="UniPathway" id="UPA00056">
    <property type="reaction ID" value="UER00095"/>
</dbReference>
<dbReference type="Proteomes" id="UP000006382">
    <property type="component" value="Chromosome"/>
</dbReference>
<dbReference type="GO" id="GO:0008685">
    <property type="term" value="F:2-C-methyl-D-erythritol 2,4-cyclodiphosphate synthase activity"/>
    <property type="evidence" value="ECO:0007669"/>
    <property type="project" value="UniProtKB-UniRule"/>
</dbReference>
<dbReference type="GO" id="GO:0050518">
    <property type="term" value="F:2-C-methyl-D-erythritol 4-phosphate cytidylyltransferase activity"/>
    <property type="evidence" value="ECO:0007669"/>
    <property type="project" value="UniProtKB-UniRule"/>
</dbReference>
<dbReference type="GO" id="GO:0046872">
    <property type="term" value="F:metal ion binding"/>
    <property type="evidence" value="ECO:0007669"/>
    <property type="project" value="UniProtKB-KW"/>
</dbReference>
<dbReference type="GO" id="GO:0019288">
    <property type="term" value="P:isopentenyl diphosphate biosynthetic process, methylerythritol 4-phosphate pathway"/>
    <property type="evidence" value="ECO:0007669"/>
    <property type="project" value="UniProtKB-UniRule"/>
</dbReference>
<dbReference type="GO" id="GO:0016114">
    <property type="term" value="P:terpenoid biosynthetic process"/>
    <property type="evidence" value="ECO:0007669"/>
    <property type="project" value="InterPro"/>
</dbReference>
<dbReference type="CDD" id="cd02516">
    <property type="entry name" value="CDP-ME_synthetase"/>
    <property type="match status" value="1"/>
</dbReference>
<dbReference type="CDD" id="cd00554">
    <property type="entry name" value="MECDP_synthase"/>
    <property type="match status" value="1"/>
</dbReference>
<dbReference type="FunFam" id="3.30.1330.50:FF:000003">
    <property type="entry name" value="2-C-methyl-D-erythritol 2,4-cyclodiphosphate synthase"/>
    <property type="match status" value="1"/>
</dbReference>
<dbReference type="FunFam" id="3.90.550.10:FF:000003">
    <property type="entry name" value="2-C-methyl-D-erythritol 4-phosphate cytidylyltransferase"/>
    <property type="match status" value="1"/>
</dbReference>
<dbReference type="Gene3D" id="3.30.1330.50">
    <property type="entry name" value="2-C-methyl-D-erythritol 2,4-cyclodiphosphate synthase"/>
    <property type="match status" value="1"/>
</dbReference>
<dbReference type="Gene3D" id="3.90.550.10">
    <property type="entry name" value="Spore Coat Polysaccharide Biosynthesis Protein SpsA, Chain A"/>
    <property type="match status" value="1"/>
</dbReference>
<dbReference type="HAMAP" id="MF_00108">
    <property type="entry name" value="IspD"/>
    <property type="match status" value="1"/>
</dbReference>
<dbReference type="HAMAP" id="MF_01520">
    <property type="entry name" value="IspDF"/>
    <property type="match status" value="1"/>
</dbReference>
<dbReference type="HAMAP" id="MF_00107">
    <property type="entry name" value="IspF"/>
    <property type="match status" value="1"/>
</dbReference>
<dbReference type="InterPro" id="IPR001228">
    <property type="entry name" value="IspD"/>
</dbReference>
<dbReference type="InterPro" id="IPR026596">
    <property type="entry name" value="IspD/F"/>
</dbReference>
<dbReference type="InterPro" id="IPR034683">
    <property type="entry name" value="IspD/TarI"/>
</dbReference>
<dbReference type="InterPro" id="IPR018294">
    <property type="entry name" value="ISPD_synthase_CS"/>
</dbReference>
<dbReference type="InterPro" id="IPR003526">
    <property type="entry name" value="MECDP_synthase"/>
</dbReference>
<dbReference type="InterPro" id="IPR036571">
    <property type="entry name" value="MECDP_synthase_sf"/>
</dbReference>
<dbReference type="InterPro" id="IPR029044">
    <property type="entry name" value="Nucleotide-diphossugar_trans"/>
</dbReference>
<dbReference type="NCBIfam" id="TIGR00453">
    <property type="entry name" value="ispD"/>
    <property type="match status" value="1"/>
</dbReference>
<dbReference type="NCBIfam" id="TIGR00151">
    <property type="entry name" value="ispF"/>
    <property type="match status" value="1"/>
</dbReference>
<dbReference type="PANTHER" id="PTHR43181">
    <property type="entry name" value="2-C-METHYL-D-ERYTHRITOL 2,4-CYCLODIPHOSPHATE SYNTHASE, CHLOROPLASTIC"/>
    <property type="match status" value="1"/>
</dbReference>
<dbReference type="PANTHER" id="PTHR43181:SF1">
    <property type="entry name" value="2-C-METHYL-D-ERYTHRITOL 2,4-CYCLODIPHOSPHATE SYNTHASE, CHLOROPLASTIC"/>
    <property type="match status" value="1"/>
</dbReference>
<dbReference type="Pfam" id="PF01128">
    <property type="entry name" value="IspD"/>
    <property type="match status" value="1"/>
</dbReference>
<dbReference type="Pfam" id="PF02542">
    <property type="entry name" value="YgbB"/>
    <property type="match status" value="1"/>
</dbReference>
<dbReference type="SUPFAM" id="SSF69765">
    <property type="entry name" value="IpsF-like"/>
    <property type="match status" value="1"/>
</dbReference>
<dbReference type="SUPFAM" id="SSF53448">
    <property type="entry name" value="Nucleotide-diphospho-sugar transferases"/>
    <property type="match status" value="1"/>
</dbReference>
<dbReference type="PROSITE" id="PS01295">
    <property type="entry name" value="ISPD"/>
    <property type="match status" value="1"/>
</dbReference>